<comment type="function">
    <text evidence="1">Involved in the modulation of the specificity of the ClpAP-mediated ATP-dependent protein degradation.</text>
</comment>
<comment type="subunit">
    <text evidence="1">Binds to the N-terminal domain of the chaperone ClpA.</text>
</comment>
<comment type="similarity">
    <text evidence="1">Belongs to the ClpS family.</text>
</comment>
<name>CLPS_SALPB</name>
<gene>
    <name evidence="1" type="primary">clpS</name>
    <name type="ordered locus">SPAB_02578</name>
</gene>
<accession>A9N7Z5</accession>
<proteinExistence type="inferred from homology"/>
<feature type="chain" id="PRO_1000079026" description="ATP-dependent Clp protease adapter protein ClpS">
    <location>
        <begin position="1"/>
        <end position="106"/>
    </location>
</feature>
<sequence>MGKTNDWLDFDQLVEDSVRDALKPPSMYKVILVNDDYTPMEFVIDVLQKFFSYDVERATQLMLAVHYQGKAICGVFTAEVAETKVAMVNKYARENEHPLLCTLEKA</sequence>
<organism>
    <name type="scientific">Salmonella paratyphi B (strain ATCC BAA-1250 / SPB7)</name>
    <dbReference type="NCBI Taxonomy" id="1016998"/>
    <lineage>
        <taxon>Bacteria</taxon>
        <taxon>Pseudomonadati</taxon>
        <taxon>Pseudomonadota</taxon>
        <taxon>Gammaproteobacteria</taxon>
        <taxon>Enterobacterales</taxon>
        <taxon>Enterobacteriaceae</taxon>
        <taxon>Salmonella</taxon>
    </lineage>
</organism>
<evidence type="ECO:0000255" key="1">
    <source>
        <dbReference type="HAMAP-Rule" id="MF_00302"/>
    </source>
</evidence>
<dbReference type="EMBL" id="CP000886">
    <property type="protein sequence ID" value="ABX67957.1"/>
    <property type="molecule type" value="Genomic_DNA"/>
</dbReference>
<dbReference type="RefSeq" id="WP_000520789.1">
    <property type="nucleotide sequence ID" value="NC_010102.1"/>
</dbReference>
<dbReference type="SMR" id="A9N7Z5"/>
<dbReference type="KEGG" id="spq:SPAB_02578"/>
<dbReference type="PATRIC" id="fig|1016998.12.peg.2439"/>
<dbReference type="HOGENOM" id="CLU_134358_2_1_6"/>
<dbReference type="BioCyc" id="SENT1016998:SPAB_RS10485-MONOMER"/>
<dbReference type="Proteomes" id="UP000008556">
    <property type="component" value="Chromosome"/>
</dbReference>
<dbReference type="GO" id="GO:0030163">
    <property type="term" value="P:protein catabolic process"/>
    <property type="evidence" value="ECO:0007669"/>
    <property type="project" value="InterPro"/>
</dbReference>
<dbReference type="GO" id="GO:0006508">
    <property type="term" value="P:proteolysis"/>
    <property type="evidence" value="ECO:0007669"/>
    <property type="project" value="UniProtKB-UniRule"/>
</dbReference>
<dbReference type="FunFam" id="3.30.1390.10:FF:000002">
    <property type="entry name" value="ATP-dependent Clp protease adapter protein ClpS"/>
    <property type="match status" value="1"/>
</dbReference>
<dbReference type="Gene3D" id="3.30.1390.10">
    <property type="match status" value="1"/>
</dbReference>
<dbReference type="HAMAP" id="MF_00302">
    <property type="entry name" value="ClpS"/>
    <property type="match status" value="1"/>
</dbReference>
<dbReference type="InterPro" id="IPR022935">
    <property type="entry name" value="ClpS"/>
</dbReference>
<dbReference type="InterPro" id="IPR003769">
    <property type="entry name" value="ClpS_core"/>
</dbReference>
<dbReference type="InterPro" id="IPR014719">
    <property type="entry name" value="Ribosomal_bL12_C/ClpS-like"/>
</dbReference>
<dbReference type="NCBIfam" id="NF000670">
    <property type="entry name" value="PRK00033.1-3"/>
    <property type="match status" value="1"/>
</dbReference>
<dbReference type="NCBIfam" id="NF000672">
    <property type="entry name" value="PRK00033.1-5"/>
    <property type="match status" value="1"/>
</dbReference>
<dbReference type="PANTHER" id="PTHR33473:SF19">
    <property type="entry name" value="ATP-DEPENDENT CLP PROTEASE ADAPTER PROTEIN CLPS"/>
    <property type="match status" value="1"/>
</dbReference>
<dbReference type="PANTHER" id="PTHR33473">
    <property type="entry name" value="ATP-DEPENDENT CLP PROTEASE ADAPTER PROTEIN CLPS1, CHLOROPLASTIC"/>
    <property type="match status" value="1"/>
</dbReference>
<dbReference type="Pfam" id="PF02617">
    <property type="entry name" value="ClpS"/>
    <property type="match status" value="1"/>
</dbReference>
<dbReference type="SUPFAM" id="SSF54736">
    <property type="entry name" value="ClpS-like"/>
    <property type="match status" value="1"/>
</dbReference>
<reference key="1">
    <citation type="submission" date="2007-11" db="EMBL/GenBank/DDBJ databases">
        <authorList>
            <consortium name="The Salmonella enterica serovar Paratyphi B Genome Sequencing Project"/>
            <person name="McClelland M."/>
            <person name="Sanderson E.K."/>
            <person name="Porwollik S."/>
            <person name="Spieth J."/>
            <person name="Clifton W.S."/>
            <person name="Fulton R."/>
            <person name="Cordes M."/>
            <person name="Wollam A."/>
            <person name="Shah N."/>
            <person name="Pepin K."/>
            <person name="Bhonagiri V."/>
            <person name="Nash W."/>
            <person name="Johnson M."/>
            <person name="Thiruvilangam P."/>
            <person name="Wilson R."/>
        </authorList>
    </citation>
    <scope>NUCLEOTIDE SEQUENCE [LARGE SCALE GENOMIC DNA]</scope>
    <source>
        <strain>ATCC BAA-1250 / SPB7</strain>
    </source>
</reference>
<protein>
    <recommendedName>
        <fullName evidence="1">ATP-dependent Clp protease adapter protein ClpS</fullName>
    </recommendedName>
</protein>